<organism>
    <name type="scientific">Oleidesulfovibrio alaskensis (strain ATCC BAA-1058 / DSM 17464 / G20)</name>
    <name type="common">Desulfovibrio alaskensis</name>
    <dbReference type="NCBI Taxonomy" id="207559"/>
    <lineage>
        <taxon>Bacteria</taxon>
        <taxon>Pseudomonadati</taxon>
        <taxon>Thermodesulfobacteriota</taxon>
        <taxon>Desulfovibrionia</taxon>
        <taxon>Desulfovibrionales</taxon>
        <taxon>Desulfovibrionaceae</taxon>
        <taxon>Oleidesulfovibrio</taxon>
    </lineage>
</organism>
<reference key="1">
    <citation type="journal article" date="2011" name="J. Bacteriol.">
        <title>Complete genome sequence and updated annotation of Desulfovibrio alaskensis G20.</title>
        <authorList>
            <person name="Hauser L.J."/>
            <person name="Land M.L."/>
            <person name="Brown S.D."/>
            <person name="Larimer F."/>
            <person name="Keller K.L."/>
            <person name="Rapp-Giles B.J."/>
            <person name="Price M.N."/>
            <person name="Lin M."/>
            <person name="Bruce D.C."/>
            <person name="Detter J.C."/>
            <person name="Tapia R."/>
            <person name="Han C.S."/>
            <person name="Goodwin L.A."/>
            <person name="Cheng J.F."/>
            <person name="Pitluck S."/>
            <person name="Copeland A."/>
            <person name="Lucas S."/>
            <person name="Nolan M."/>
            <person name="Lapidus A.L."/>
            <person name="Palumbo A.V."/>
            <person name="Wall J.D."/>
        </authorList>
    </citation>
    <scope>NUCLEOTIDE SEQUENCE [LARGE SCALE GENOMIC DNA]</scope>
    <source>
        <strain>ATCC BAA-1058 / DSM 17464 / G20</strain>
    </source>
</reference>
<keyword id="KW-0119">Carbohydrate metabolism</keyword>
<keyword id="KW-0320">Glycogen biosynthesis</keyword>
<keyword id="KW-0321">Glycogen metabolism</keyword>
<keyword id="KW-0328">Glycosyltransferase</keyword>
<keyword id="KW-1185">Reference proteome</keyword>
<keyword id="KW-0808">Transferase</keyword>
<gene>
    <name evidence="1" type="primary">glgB</name>
    <name type="ordered locus">Dde_2285</name>
</gene>
<feature type="chain" id="PRO_0000260652" description="1,4-alpha-glucan branching enzyme GlgB">
    <location>
        <begin position="1"/>
        <end position="638"/>
    </location>
</feature>
<feature type="active site" description="Nucleophile" evidence="1">
    <location>
        <position position="320"/>
    </location>
</feature>
<feature type="active site" description="Proton donor" evidence="1">
    <location>
        <position position="373"/>
    </location>
</feature>
<dbReference type="EC" id="2.4.1.18" evidence="1"/>
<dbReference type="EMBL" id="CP000112">
    <property type="protein sequence ID" value="ABB39082.1"/>
    <property type="molecule type" value="Genomic_DNA"/>
</dbReference>
<dbReference type="RefSeq" id="WP_011368167.1">
    <property type="nucleotide sequence ID" value="NC_007519.1"/>
</dbReference>
<dbReference type="SMR" id="Q30Z14"/>
<dbReference type="STRING" id="207559.Dde_2285"/>
<dbReference type="CAZy" id="CBM48">
    <property type="family name" value="Carbohydrate-Binding Module Family 48"/>
</dbReference>
<dbReference type="CAZy" id="GH13">
    <property type="family name" value="Glycoside Hydrolase Family 13"/>
</dbReference>
<dbReference type="KEGG" id="dde:Dde_2285"/>
<dbReference type="eggNOG" id="COG0296">
    <property type="taxonomic scope" value="Bacteria"/>
</dbReference>
<dbReference type="HOGENOM" id="CLU_004245_3_2_7"/>
<dbReference type="UniPathway" id="UPA00164"/>
<dbReference type="Proteomes" id="UP000002710">
    <property type="component" value="Chromosome"/>
</dbReference>
<dbReference type="GO" id="GO:0005829">
    <property type="term" value="C:cytosol"/>
    <property type="evidence" value="ECO:0007669"/>
    <property type="project" value="TreeGrafter"/>
</dbReference>
<dbReference type="GO" id="GO:0003844">
    <property type="term" value="F:1,4-alpha-glucan branching enzyme activity"/>
    <property type="evidence" value="ECO:0007669"/>
    <property type="project" value="UniProtKB-UniRule"/>
</dbReference>
<dbReference type="GO" id="GO:0043169">
    <property type="term" value="F:cation binding"/>
    <property type="evidence" value="ECO:0007669"/>
    <property type="project" value="InterPro"/>
</dbReference>
<dbReference type="GO" id="GO:0004553">
    <property type="term" value="F:hydrolase activity, hydrolyzing O-glycosyl compounds"/>
    <property type="evidence" value="ECO:0007669"/>
    <property type="project" value="InterPro"/>
</dbReference>
<dbReference type="GO" id="GO:0005978">
    <property type="term" value="P:glycogen biosynthetic process"/>
    <property type="evidence" value="ECO:0007669"/>
    <property type="project" value="UniProtKB-UniRule"/>
</dbReference>
<dbReference type="CDD" id="cd11322">
    <property type="entry name" value="AmyAc_Glg_BE"/>
    <property type="match status" value="1"/>
</dbReference>
<dbReference type="CDD" id="cd02855">
    <property type="entry name" value="E_set_GBE_prok_N"/>
    <property type="match status" value="1"/>
</dbReference>
<dbReference type="FunFam" id="2.60.40.1180:FF:000002">
    <property type="entry name" value="1,4-alpha-glucan branching enzyme GlgB"/>
    <property type="match status" value="1"/>
</dbReference>
<dbReference type="FunFam" id="3.20.20.80:FF:000003">
    <property type="entry name" value="1,4-alpha-glucan branching enzyme GlgB"/>
    <property type="match status" value="1"/>
</dbReference>
<dbReference type="Gene3D" id="3.20.20.80">
    <property type="entry name" value="Glycosidases"/>
    <property type="match status" value="1"/>
</dbReference>
<dbReference type="Gene3D" id="2.60.40.1180">
    <property type="entry name" value="Golgi alpha-mannosidase II"/>
    <property type="match status" value="1"/>
</dbReference>
<dbReference type="Gene3D" id="2.60.40.10">
    <property type="entry name" value="Immunoglobulins"/>
    <property type="match status" value="1"/>
</dbReference>
<dbReference type="HAMAP" id="MF_00685">
    <property type="entry name" value="GlgB"/>
    <property type="match status" value="1"/>
</dbReference>
<dbReference type="InterPro" id="IPR006048">
    <property type="entry name" value="A-amylase/branching_C"/>
</dbReference>
<dbReference type="InterPro" id="IPR037439">
    <property type="entry name" value="Branching_enzy"/>
</dbReference>
<dbReference type="InterPro" id="IPR006407">
    <property type="entry name" value="GlgB"/>
</dbReference>
<dbReference type="InterPro" id="IPR044143">
    <property type="entry name" value="GlgB_N_E_set_prok"/>
</dbReference>
<dbReference type="InterPro" id="IPR006047">
    <property type="entry name" value="Glyco_hydro_13_cat_dom"/>
</dbReference>
<dbReference type="InterPro" id="IPR004193">
    <property type="entry name" value="Glyco_hydro_13_N"/>
</dbReference>
<dbReference type="InterPro" id="IPR013780">
    <property type="entry name" value="Glyco_hydro_b"/>
</dbReference>
<dbReference type="InterPro" id="IPR017853">
    <property type="entry name" value="Glycoside_hydrolase_SF"/>
</dbReference>
<dbReference type="InterPro" id="IPR013783">
    <property type="entry name" value="Ig-like_fold"/>
</dbReference>
<dbReference type="InterPro" id="IPR014756">
    <property type="entry name" value="Ig_E-set"/>
</dbReference>
<dbReference type="NCBIfam" id="TIGR01515">
    <property type="entry name" value="branching_enzym"/>
    <property type="match status" value="1"/>
</dbReference>
<dbReference type="NCBIfam" id="NF003811">
    <property type="entry name" value="PRK05402.1"/>
    <property type="match status" value="1"/>
</dbReference>
<dbReference type="NCBIfam" id="NF008967">
    <property type="entry name" value="PRK12313.1"/>
    <property type="match status" value="1"/>
</dbReference>
<dbReference type="PANTHER" id="PTHR43651">
    <property type="entry name" value="1,4-ALPHA-GLUCAN-BRANCHING ENZYME"/>
    <property type="match status" value="1"/>
</dbReference>
<dbReference type="PANTHER" id="PTHR43651:SF3">
    <property type="entry name" value="1,4-ALPHA-GLUCAN-BRANCHING ENZYME"/>
    <property type="match status" value="1"/>
</dbReference>
<dbReference type="Pfam" id="PF00128">
    <property type="entry name" value="Alpha-amylase"/>
    <property type="match status" value="2"/>
</dbReference>
<dbReference type="Pfam" id="PF02806">
    <property type="entry name" value="Alpha-amylase_C"/>
    <property type="match status" value="1"/>
</dbReference>
<dbReference type="Pfam" id="PF02922">
    <property type="entry name" value="CBM_48"/>
    <property type="match status" value="1"/>
</dbReference>
<dbReference type="PIRSF" id="PIRSF000463">
    <property type="entry name" value="GlgB"/>
    <property type="match status" value="1"/>
</dbReference>
<dbReference type="SMART" id="SM00642">
    <property type="entry name" value="Aamy"/>
    <property type="match status" value="1"/>
</dbReference>
<dbReference type="SUPFAM" id="SSF51445">
    <property type="entry name" value="(Trans)glycosidases"/>
    <property type="match status" value="1"/>
</dbReference>
<dbReference type="SUPFAM" id="SSF81296">
    <property type="entry name" value="E set domains"/>
    <property type="match status" value="1"/>
</dbReference>
<dbReference type="SUPFAM" id="SSF51011">
    <property type="entry name" value="Glycosyl hydrolase domain"/>
    <property type="match status" value="1"/>
</dbReference>
<sequence length="638" mass="72878">MATPVESGTVPCSLEPFDVYLFGRGEHWDIYRVLGAHAHAQDGETGYRFAVWAPNAHAVSLVGPFNDWRSGDFPLFPVGTSGIWAGFVAGMEYGRLYKFAVQGADGTVRLKTDPYALYCEMRPGTASFTWSLDSYAWNDAAWMQRRREAGPPLQQPVSIYELHAGSWMRRHGEGHPFVNWDELAGTLIPYVRDAGFTHIELMPVAEHPLDQSWGYQTGAYYAPTSRFGTPDDLRRFVDLCHQQGIGVILDWVPAHFPKDDWSLGRFDGTALYEHLDPRLGEHPDWGTYVFNYGRHEVRNFLFANALYWFKEFHVDGLRIDAVASMLYLDYSRKEGEWLPNVHGGNENLEAIDFLRELNRVVHEQYPGVMMIAEESTSWPGVSRPLYTGGLGFTFKWNMGWMHDTLNYMRQDPVFRAYQHSSLTFSMLYAFSENFVLPLSHDEVVHGKGALLSKMPGDMWQQQANLRLMYAYMWAHPGKKLLFMGGEIGQWNEWSESREPDWCLREFPAHEGIRNLVRDLNGIYAQEPAMHRHDHDWSGFRWLDFSDYGCSVISFARFAEDSPPVMWVFNFTPVVRRWYRVPCPRAGEWQEVLNTDSGYYGGSNVGNGGGAVACTDNWHGGHFMELTLPPLAAVALKPV</sequence>
<name>GLGB_OLEA2</name>
<protein>
    <recommendedName>
        <fullName evidence="1">1,4-alpha-glucan branching enzyme GlgB</fullName>
        <ecNumber evidence="1">2.4.1.18</ecNumber>
    </recommendedName>
    <alternativeName>
        <fullName evidence="1">1,4-alpha-D-glucan:1,4-alpha-D-glucan 6-glucosyl-transferase</fullName>
    </alternativeName>
    <alternativeName>
        <fullName evidence="1">Alpha-(1-&gt;4)-glucan branching enzyme</fullName>
    </alternativeName>
    <alternativeName>
        <fullName evidence="1">Glycogen branching enzyme</fullName>
        <shortName evidence="1">BE</shortName>
    </alternativeName>
</protein>
<comment type="function">
    <text evidence="1">Catalyzes the formation of the alpha-1,6-glucosidic linkages in glycogen by scission of a 1,4-alpha-linked oligosaccharide from growing alpha-1,4-glucan chains and the subsequent attachment of the oligosaccharide to the alpha-1,6 position.</text>
</comment>
<comment type="catalytic activity">
    <reaction evidence="1">
        <text>Transfers a segment of a (1-&gt;4)-alpha-D-glucan chain to a primary hydroxy group in a similar glucan chain.</text>
        <dbReference type="EC" id="2.4.1.18"/>
    </reaction>
</comment>
<comment type="pathway">
    <text evidence="1">Glycan biosynthesis; glycogen biosynthesis.</text>
</comment>
<comment type="subunit">
    <text evidence="1">Monomer.</text>
</comment>
<comment type="similarity">
    <text evidence="1">Belongs to the glycosyl hydrolase 13 family. GlgB subfamily.</text>
</comment>
<evidence type="ECO:0000255" key="1">
    <source>
        <dbReference type="HAMAP-Rule" id="MF_00685"/>
    </source>
</evidence>
<accession>Q30Z14</accession>
<proteinExistence type="inferred from homology"/>